<comment type="function">
    <text evidence="1">Binds 23S rRNA and is also seen to make contacts with the A and possibly P site tRNAs.</text>
</comment>
<comment type="subunit">
    <text evidence="1">Part of the 50S ribosomal subunit.</text>
</comment>
<comment type="similarity">
    <text evidence="1">Belongs to the universal ribosomal protein uL16 family.</text>
</comment>
<sequence length="139" mass="15670">MLIPRRVKYRKQHHPKRTGAAKGGTQLAFGDYGIQATEGGYLTNRQIEAARIAMTRYIKRGGKVWINVYPDRPMTKHPAESRMGSGKGTPEWWIANIKPGRVLFELSGVPEDVAREAMRLAIHKLPMKARFISREGGDN</sequence>
<dbReference type="EMBL" id="AE017283">
    <property type="protein sequence ID" value="AAT83580.1"/>
    <property type="molecule type" value="Genomic_DNA"/>
</dbReference>
<dbReference type="RefSeq" id="WP_002516060.1">
    <property type="nucleotide sequence ID" value="NZ_CP025935.1"/>
</dbReference>
<dbReference type="PDB" id="8CRX">
    <property type="method" value="EM"/>
    <property type="resolution" value="2.78 A"/>
    <property type="chains" value="l=1-139"/>
</dbReference>
<dbReference type="PDB" id="8CVM">
    <property type="method" value="EM"/>
    <property type="resolution" value="2.66 A"/>
    <property type="chains" value="l=1-139"/>
</dbReference>
<dbReference type="PDBsum" id="8CRX"/>
<dbReference type="PDBsum" id="8CVM"/>
<dbReference type="SMR" id="Q6A6N3"/>
<dbReference type="EnsemblBacteria" id="AAT83580">
    <property type="protein sequence ID" value="AAT83580"/>
    <property type="gene ID" value="PPA1856"/>
</dbReference>
<dbReference type="GeneID" id="92857803"/>
<dbReference type="KEGG" id="pac:PPA1856"/>
<dbReference type="eggNOG" id="COG0197">
    <property type="taxonomic scope" value="Bacteria"/>
</dbReference>
<dbReference type="HOGENOM" id="CLU_078858_2_1_11"/>
<dbReference type="Proteomes" id="UP000000603">
    <property type="component" value="Chromosome"/>
</dbReference>
<dbReference type="GO" id="GO:0022625">
    <property type="term" value="C:cytosolic large ribosomal subunit"/>
    <property type="evidence" value="ECO:0007669"/>
    <property type="project" value="TreeGrafter"/>
</dbReference>
<dbReference type="GO" id="GO:0019843">
    <property type="term" value="F:rRNA binding"/>
    <property type="evidence" value="ECO:0007669"/>
    <property type="project" value="UniProtKB-UniRule"/>
</dbReference>
<dbReference type="GO" id="GO:0003735">
    <property type="term" value="F:structural constituent of ribosome"/>
    <property type="evidence" value="ECO:0007669"/>
    <property type="project" value="InterPro"/>
</dbReference>
<dbReference type="GO" id="GO:0000049">
    <property type="term" value="F:tRNA binding"/>
    <property type="evidence" value="ECO:0007669"/>
    <property type="project" value="UniProtKB-KW"/>
</dbReference>
<dbReference type="GO" id="GO:0006412">
    <property type="term" value="P:translation"/>
    <property type="evidence" value="ECO:0007669"/>
    <property type="project" value="UniProtKB-UniRule"/>
</dbReference>
<dbReference type="CDD" id="cd01433">
    <property type="entry name" value="Ribosomal_L16_L10e"/>
    <property type="match status" value="1"/>
</dbReference>
<dbReference type="FunFam" id="3.90.1170.10:FF:000001">
    <property type="entry name" value="50S ribosomal protein L16"/>
    <property type="match status" value="1"/>
</dbReference>
<dbReference type="Gene3D" id="3.90.1170.10">
    <property type="entry name" value="Ribosomal protein L10e/L16"/>
    <property type="match status" value="1"/>
</dbReference>
<dbReference type="HAMAP" id="MF_01342">
    <property type="entry name" value="Ribosomal_uL16"/>
    <property type="match status" value="1"/>
</dbReference>
<dbReference type="InterPro" id="IPR047873">
    <property type="entry name" value="Ribosomal_uL16"/>
</dbReference>
<dbReference type="InterPro" id="IPR000114">
    <property type="entry name" value="Ribosomal_uL16_bact-type"/>
</dbReference>
<dbReference type="InterPro" id="IPR020798">
    <property type="entry name" value="Ribosomal_uL16_CS"/>
</dbReference>
<dbReference type="InterPro" id="IPR016180">
    <property type="entry name" value="Ribosomal_uL16_dom"/>
</dbReference>
<dbReference type="InterPro" id="IPR036920">
    <property type="entry name" value="Ribosomal_uL16_sf"/>
</dbReference>
<dbReference type="NCBIfam" id="TIGR01164">
    <property type="entry name" value="rplP_bact"/>
    <property type="match status" value="1"/>
</dbReference>
<dbReference type="PANTHER" id="PTHR12220">
    <property type="entry name" value="50S/60S RIBOSOMAL PROTEIN L16"/>
    <property type="match status" value="1"/>
</dbReference>
<dbReference type="PANTHER" id="PTHR12220:SF13">
    <property type="entry name" value="LARGE RIBOSOMAL SUBUNIT PROTEIN UL16M"/>
    <property type="match status" value="1"/>
</dbReference>
<dbReference type="Pfam" id="PF00252">
    <property type="entry name" value="Ribosomal_L16"/>
    <property type="match status" value="1"/>
</dbReference>
<dbReference type="PRINTS" id="PR00060">
    <property type="entry name" value="RIBOSOMALL16"/>
</dbReference>
<dbReference type="SUPFAM" id="SSF54686">
    <property type="entry name" value="Ribosomal protein L16p/L10e"/>
    <property type="match status" value="1"/>
</dbReference>
<dbReference type="PROSITE" id="PS00586">
    <property type="entry name" value="RIBOSOMAL_L16_1"/>
    <property type="match status" value="1"/>
</dbReference>
<dbReference type="PROSITE" id="PS00701">
    <property type="entry name" value="RIBOSOMAL_L16_2"/>
    <property type="match status" value="1"/>
</dbReference>
<gene>
    <name evidence="1" type="primary">rplP</name>
    <name type="ordered locus">PPA1856</name>
</gene>
<evidence type="ECO:0000255" key="1">
    <source>
        <dbReference type="HAMAP-Rule" id="MF_01342"/>
    </source>
</evidence>
<evidence type="ECO:0000256" key="2">
    <source>
        <dbReference type="SAM" id="MobiDB-lite"/>
    </source>
</evidence>
<evidence type="ECO:0000305" key="3"/>
<evidence type="ECO:0007829" key="4">
    <source>
        <dbReference type="PDB" id="8CVM"/>
    </source>
</evidence>
<reference key="1">
    <citation type="journal article" date="2004" name="Science">
        <title>The complete genome sequence of Propionibacterium acnes, a commensal of human skin.</title>
        <authorList>
            <person name="Brueggemann H."/>
            <person name="Henne A."/>
            <person name="Hoster F."/>
            <person name="Liesegang H."/>
            <person name="Wiezer A."/>
            <person name="Strittmatter A."/>
            <person name="Hujer S."/>
            <person name="Duerre P."/>
            <person name="Gottschalk G."/>
        </authorList>
    </citation>
    <scope>NUCLEOTIDE SEQUENCE [LARGE SCALE GENOMIC DNA]</scope>
    <source>
        <strain>DSM 16379 / KPA171202</strain>
    </source>
</reference>
<keyword id="KW-0002">3D-structure</keyword>
<keyword id="KW-0687">Ribonucleoprotein</keyword>
<keyword id="KW-0689">Ribosomal protein</keyword>
<keyword id="KW-0694">RNA-binding</keyword>
<keyword id="KW-0699">rRNA-binding</keyword>
<keyword id="KW-0820">tRNA-binding</keyword>
<organism>
    <name type="scientific">Cutibacterium acnes (strain DSM 16379 / KPA171202)</name>
    <name type="common">Propionibacterium acnes</name>
    <dbReference type="NCBI Taxonomy" id="267747"/>
    <lineage>
        <taxon>Bacteria</taxon>
        <taxon>Bacillati</taxon>
        <taxon>Actinomycetota</taxon>
        <taxon>Actinomycetes</taxon>
        <taxon>Propionibacteriales</taxon>
        <taxon>Propionibacteriaceae</taxon>
        <taxon>Cutibacterium</taxon>
    </lineage>
</organism>
<protein>
    <recommendedName>
        <fullName evidence="1">Large ribosomal subunit protein uL16</fullName>
    </recommendedName>
    <alternativeName>
        <fullName evidence="3">50S ribosomal protein L16</fullName>
    </alternativeName>
</protein>
<feature type="chain" id="PRO_0000062171" description="Large ribosomal subunit protein uL16">
    <location>
        <begin position="1"/>
        <end position="139"/>
    </location>
</feature>
<feature type="region of interest" description="Disordered" evidence="2">
    <location>
        <begin position="1"/>
        <end position="23"/>
    </location>
</feature>
<feature type="compositionally biased region" description="Basic residues" evidence="2">
    <location>
        <begin position="1"/>
        <end position="19"/>
    </location>
</feature>
<feature type="strand" evidence="4">
    <location>
        <begin position="29"/>
        <end position="38"/>
    </location>
</feature>
<feature type="strand" evidence="4">
    <location>
        <begin position="40"/>
        <end position="43"/>
    </location>
</feature>
<feature type="helix" evidence="4">
    <location>
        <begin position="44"/>
        <end position="58"/>
    </location>
</feature>
<feature type="strand" evidence="4">
    <location>
        <begin position="61"/>
        <end position="66"/>
    </location>
</feature>
<feature type="strand" evidence="4">
    <location>
        <begin position="72"/>
        <end position="76"/>
    </location>
</feature>
<feature type="strand" evidence="4">
    <location>
        <begin position="89"/>
        <end position="97"/>
    </location>
</feature>
<feature type="strand" evidence="4">
    <location>
        <begin position="102"/>
        <end position="109"/>
    </location>
</feature>
<feature type="helix" evidence="4">
    <location>
        <begin position="111"/>
        <end position="122"/>
    </location>
</feature>
<feature type="strand" evidence="4">
    <location>
        <begin position="125"/>
        <end position="127"/>
    </location>
</feature>
<feature type="strand" evidence="4">
    <location>
        <begin position="129"/>
        <end position="134"/>
    </location>
</feature>
<proteinExistence type="evidence at protein level"/>
<name>RL16_CUTAK</name>
<accession>Q6A6N3</accession>